<evidence type="ECO:0000255" key="1">
    <source>
        <dbReference type="HAMAP-Rule" id="MF_00443"/>
    </source>
</evidence>
<accession>Q5YNQ2</accession>
<gene>
    <name evidence="1" type="primary">thiG</name>
    <name type="ordered locus">NFA_53370</name>
</gene>
<comment type="function">
    <text evidence="1">Catalyzes the rearrangement of 1-deoxy-D-xylulose 5-phosphate (DXP) to produce the thiazole phosphate moiety of thiamine. Sulfur is provided by the thiocarboxylate moiety of the carrier protein ThiS. In vitro, sulfur can be provided by H(2)S.</text>
</comment>
<comment type="catalytic activity">
    <reaction evidence="1">
        <text>[ThiS sulfur-carrier protein]-C-terminal-Gly-aminoethanethioate + 2-iminoacetate + 1-deoxy-D-xylulose 5-phosphate = [ThiS sulfur-carrier protein]-C-terminal Gly-Gly + 2-[(2R,5Z)-2-carboxy-4-methylthiazol-5(2H)-ylidene]ethyl phosphate + 2 H2O + H(+)</text>
        <dbReference type="Rhea" id="RHEA:26297"/>
        <dbReference type="Rhea" id="RHEA-COMP:12909"/>
        <dbReference type="Rhea" id="RHEA-COMP:19908"/>
        <dbReference type="ChEBI" id="CHEBI:15377"/>
        <dbReference type="ChEBI" id="CHEBI:15378"/>
        <dbReference type="ChEBI" id="CHEBI:57792"/>
        <dbReference type="ChEBI" id="CHEBI:62899"/>
        <dbReference type="ChEBI" id="CHEBI:77846"/>
        <dbReference type="ChEBI" id="CHEBI:90778"/>
        <dbReference type="ChEBI" id="CHEBI:232372"/>
        <dbReference type="EC" id="2.8.1.10"/>
    </reaction>
</comment>
<comment type="pathway">
    <text evidence="1">Cofactor biosynthesis; thiamine diphosphate biosynthesis.</text>
</comment>
<comment type="subunit">
    <text evidence="1">Homotetramer. Forms heterodimers with either ThiH or ThiS.</text>
</comment>
<comment type="subcellular location">
    <subcellularLocation>
        <location evidence="1">Cytoplasm</location>
    </subcellularLocation>
</comment>
<comment type="similarity">
    <text evidence="1">Belongs to the ThiG family.</text>
</comment>
<proteinExistence type="inferred from homology"/>
<name>THIG_NOCFA</name>
<protein>
    <recommendedName>
        <fullName evidence="1">Thiazole synthase</fullName>
        <ecNumber evidence="1">2.8.1.10</ecNumber>
    </recommendedName>
</protein>
<sequence length="256" mass="26409">MAEHPDLPPLRIADREFGSRLIMGTGGAENLAVLEEALVASGTELTTVAMRRVDAAGGTGVLDLLKRLEITPLPNTAGCRTAAEAVLTAQLAAEALDTTWVKLEVVADERTLLPDPIELLSAAEQLVDAGFTVLPYTNDDPVLARRLEDAGCAAVMPLGAPIGTGLGIGNPHNIEMIVAAAGVPVILDAGIGTASDAALAMELGCSAVLLATAVTRAKRPPLMAAAMADAVRAGLLAREAGRIPKRFWAQASSPQR</sequence>
<organism>
    <name type="scientific">Nocardia farcinica (strain IFM 10152)</name>
    <dbReference type="NCBI Taxonomy" id="247156"/>
    <lineage>
        <taxon>Bacteria</taxon>
        <taxon>Bacillati</taxon>
        <taxon>Actinomycetota</taxon>
        <taxon>Actinomycetes</taxon>
        <taxon>Mycobacteriales</taxon>
        <taxon>Nocardiaceae</taxon>
        <taxon>Nocardia</taxon>
    </lineage>
</organism>
<dbReference type="EC" id="2.8.1.10" evidence="1"/>
<dbReference type="EMBL" id="AP006618">
    <property type="protein sequence ID" value="BAD60189.1"/>
    <property type="molecule type" value="Genomic_DNA"/>
</dbReference>
<dbReference type="RefSeq" id="WP_011211871.1">
    <property type="nucleotide sequence ID" value="NC_006361.1"/>
</dbReference>
<dbReference type="SMR" id="Q5YNQ2"/>
<dbReference type="STRING" id="247156.NFA_53370"/>
<dbReference type="GeneID" id="61135913"/>
<dbReference type="KEGG" id="nfa:NFA_53370"/>
<dbReference type="eggNOG" id="COG2022">
    <property type="taxonomic scope" value="Bacteria"/>
</dbReference>
<dbReference type="HOGENOM" id="CLU_062233_1_0_11"/>
<dbReference type="OrthoDB" id="9805935at2"/>
<dbReference type="UniPathway" id="UPA00060"/>
<dbReference type="Proteomes" id="UP000006820">
    <property type="component" value="Chromosome"/>
</dbReference>
<dbReference type="GO" id="GO:0005737">
    <property type="term" value="C:cytoplasm"/>
    <property type="evidence" value="ECO:0007669"/>
    <property type="project" value="UniProtKB-SubCell"/>
</dbReference>
<dbReference type="GO" id="GO:1990107">
    <property type="term" value="F:thiazole synthase activity"/>
    <property type="evidence" value="ECO:0007669"/>
    <property type="project" value="UniProtKB-EC"/>
</dbReference>
<dbReference type="GO" id="GO:0009229">
    <property type="term" value="P:thiamine diphosphate biosynthetic process"/>
    <property type="evidence" value="ECO:0007669"/>
    <property type="project" value="UniProtKB-UniRule"/>
</dbReference>
<dbReference type="CDD" id="cd04728">
    <property type="entry name" value="ThiG"/>
    <property type="match status" value="1"/>
</dbReference>
<dbReference type="Gene3D" id="3.20.20.70">
    <property type="entry name" value="Aldolase class I"/>
    <property type="match status" value="1"/>
</dbReference>
<dbReference type="HAMAP" id="MF_00443">
    <property type="entry name" value="ThiG"/>
    <property type="match status" value="1"/>
</dbReference>
<dbReference type="InterPro" id="IPR013785">
    <property type="entry name" value="Aldolase_TIM"/>
</dbReference>
<dbReference type="InterPro" id="IPR033983">
    <property type="entry name" value="Thiazole_synthase_ThiG"/>
</dbReference>
<dbReference type="InterPro" id="IPR008867">
    <property type="entry name" value="ThiG"/>
</dbReference>
<dbReference type="PANTHER" id="PTHR34266">
    <property type="entry name" value="THIAZOLE SYNTHASE"/>
    <property type="match status" value="1"/>
</dbReference>
<dbReference type="PANTHER" id="PTHR34266:SF2">
    <property type="entry name" value="THIAZOLE SYNTHASE"/>
    <property type="match status" value="1"/>
</dbReference>
<dbReference type="Pfam" id="PF05690">
    <property type="entry name" value="ThiG"/>
    <property type="match status" value="1"/>
</dbReference>
<dbReference type="SUPFAM" id="SSF110399">
    <property type="entry name" value="ThiG-like"/>
    <property type="match status" value="1"/>
</dbReference>
<reference key="1">
    <citation type="journal article" date="2004" name="Proc. Natl. Acad. Sci. U.S.A.">
        <title>The complete genomic sequence of Nocardia farcinica IFM 10152.</title>
        <authorList>
            <person name="Ishikawa J."/>
            <person name="Yamashita A."/>
            <person name="Mikami Y."/>
            <person name="Hoshino Y."/>
            <person name="Kurita H."/>
            <person name="Hotta K."/>
            <person name="Shiba T."/>
            <person name="Hattori M."/>
        </authorList>
    </citation>
    <scope>NUCLEOTIDE SEQUENCE [LARGE SCALE GENOMIC DNA]</scope>
    <source>
        <strain>IFM 10152</strain>
    </source>
</reference>
<feature type="chain" id="PRO_0000162837" description="Thiazole synthase">
    <location>
        <begin position="1"/>
        <end position="256"/>
    </location>
</feature>
<feature type="active site" description="Schiff-base intermediate with DXP" evidence="1">
    <location>
        <position position="102"/>
    </location>
</feature>
<feature type="binding site" evidence="1">
    <location>
        <position position="163"/>
    </location>
    <ligand>
        <name>1-deoxy-D-xylulose 5-phosphate</name>
        <dbReference type="ChEBI" id="CHEBI:57792"/>
    </ligand>
</feature>
<feature type="binding site" evidence="1">
    <location>
        <begin position="189"/>
        <end position="190"/>
    </location>
    <ligand>
        <name>1-deoxy-D-xylulose 5-phosphate</name>
        <dbReference type="ChEBI" id="CHEBI:57792"/>
    </ligand>
</feature>
<feature type="binding site" evidence="1">
    <location>
        <begin position="211"/>
        <end position="212"/>
    </location>
    <ligand>
        <name>1-deoxy-D-xylulose 5-phosphate</name>
        <dbReference type="ChEBI" id="CHEBI:57792"/>
    </ligand>
</feature>
<keyword id="KW-0963">Cytoplasm</keyword>
<keyword id="KW-1185">Reference proteome</keyword>
<keyword id="KW-0704">Schiff base</keyword>
<keyword id="KW-0784">Thiamine biosynthesis</keyword>
<keyword id="KW-0808">Transferase</keyword>